<gene>
    <name evidence="1" type="primary">atpF</name>
    <name type="ordered locus">MMAR_4091</name>
</gene>
<evidence type="ECO:0000255" key="1">
    <source>
        <dbReference type="HAMAP-Rule" id="MF_01398"/>
    </source>
</evidence>
<dbReference type="EMBL" id="CP000854">
    <property type="protein sequence ID" value="ACC42498.1"/>
    <property type="molecule type" value="Genomic_DNA"/>
</dbReference>
<dbReference type="RefSeq" id="WP_012395674.1">
    <property type="nucleotide sequence ID" value="NC_010612.1"/>
</dbReference>
<dbReference type="SMR" id="B2HQK6"/>
<dbReference type="STRING" id="216594.MMAR_4091"/>
<dbReference type="KEGG" id="mmi:MMAR_4091"/>
<dbReference type="eggNOG" id="COG0711">
    <property type="taxonomic scope" value="Bacteria"/>
</dbReference>
<dbReference type="HOGENOM" id="CLU_079215_5_2_11"/>
<dbReference type="OrthoDB" id="4638851at2"/>
<dbReference type="Proteomes" id="UP000001190">
    <property type="component" value="Chromosome"/>
</dbReference>
<dbReference type="GO" id="GO:0005886">
    <property type="term" value="C:plasma membrane"/>
    <property type="evidence" value="ECO:0007669"/>
    <property type="project" value="UniProtKB-SubCell"/>
</dbReference>
<dbReference type="GO" id="GO:0045259">
    <property type="term" value="C:proton-transporting ATP synthase complex"/>
    <property type="evidence" value="ECO:0007669"/>
    <property type="project" value="UniProtKB-KW"/>
</dbReference>
<dbReference type="GO" id="GO:0046933">
    <property type="term" value="F:proton-transporting ATP synthase activity, rotational mechanism"/>
    <property type="evidence" value="ECO:0007669"/>
    <property type="project" value="UniProtKB-UniRule"/>
</dbReference>
<dbReference type="GO" id="GO:0046961">
    <property type="term" value="F:proton-transporting ATPase activity, rotational mechanism"/>
    <property type="evidence" value="ECO:0007669"/>
    <property type="project" value="TreeGrafter"/>
</dbReference>
<dbReference type="CDD" id="cd06503">
    <property type="entry name" value="ATP-synt_Fo_b"/>
    <property type="match status" value="1"/>
</dbReference>
<dbReference type="Gene3D" id="1.20.5.620">
    <property type="entry name" value="F1F0 ATP synthase subunit B, membrane domain"/>
    <property type="match status" value="1"/>
</dbReference>
<dbReference type="HAMAP" id="MF_01398">
    <property type="entry name" value="ATP_synth_b_bprime"/>
    <property type="match status" value="1"/>
</dbReference>
<dbReference type="InterPro" id="IPR028987">
    <property type="entry name" value="ATP_synth_B-like_membr_sf"/>
</dbReference>
<dbReference type="InterPro" id="IPR002146">
    <property type="entry name" value="ATP_synth_b/b'su_bac/chlpt"/>
</dbReference>
<dbReference type="InterPro" id="IPR050059">
    <property type="entry name" value="ATP_synthase_B_chain"/>
</dbReference>
<dbReference type="NCBIfam" id="NF004412">
    <property type="entry name" value="PRK05759.1-3"/>
    <property type="match status" value="1"/>
</dbReference>
<dbReference type="PANTHER" id="PTHR33445:SF1">
    <property type="entry name" value="ATP SYNTHASE SUBUNIT B"/>
    <property type="match status" value="1"/>
</dbReference>
<dbReference type="PANTHER" id="PTHR33445">
    <property type="entry name" value="ATP SYNTHASE SUBUNIT B', CHLOROPLASTIC"/>
    <property type="match status" value="1"/>
</dbReference>
<dbReference type="Pfam" id="PF00430">
    <property type="entry name" value="ATP-synt_B"/>
    <property type="match status" value="1"/>
</dbReference>
<dbReference type="SUPFAM" id="SSF81573">
    <property type="entry name" value="F1F0 ATP synthase subunit B, membrane domain"/>
    <property type="match status" value="1"/>
</dbReference>
<reference key="1">
    <citation type="journal article" date="2008" name="Genome Res.">
        <title>Insights from the complete genome sequence of Mycobacterium marinum on the evolution of Mycobacterium tuberculosis.</title>
        <authorList>
            <person name="Stinear T.P."/>
            <person name="Seemann T."/>
            <person name="Harrison P.F."/>
            <person name="Jenkin G.A."/>
            <person name="Davies J.K."/>
            <person name="Johnson P.D."/>
            <person name="Abdellah Z."/>
            <person name="Arrowsmith C."/>
            <person name="Chillingworth T."/>
            <person name="Churcher C."/>
            <person name="Clarke K."/>
            <person name="Cronin A."/>
            <person name="Davis P."/>
            <person name="Goodhead I."/>
            <person name="Holroyd N."/>
            <person name="Jagels K."/>
            <person name="Lord A."/>
            <person name="Moule S."/>
            <person name="Mungall K."/>
            <person name="Norbertczak H."/>
            <person name="Quail M.A."/>
            <person name="Rabbinowitsch E."/>
            <person name="Walker D."/>
            <person name="White B."/>
            <person name="Whitehead S."/>
            <person name="Small P.L."/>
            <person name="Brosch R."/>
            <person name="Ramakrishnan L."/>
            <person name="Fischbach M.A."/>
            <person name="Parkhill J."/>
            <person name="Cole S.T."/>
        </authorList>
    </citation>
    <scope>NUCLEOTIDE SEQUENCE [LARGE SCALE GENOMIC DNA]</scope>
    <source>
        <strain>ATCC BAA-535 / M</strain>
    </source>
</reference>
<feature type="chain" id="PRO_0000368597" description="ATP synthase subunit b">
    <location>
        <begin position="1"/>
        <end position="170"/>
    </location>
</feature>
<feature type="transmembrane region" description="Helical" evidence="1">
    <location>
        <begin position="30"/>
        <end position="50"/>
    </location>
</feature>
<name>ATPF_MYCMM</name>
<proteinExistence type="inferred from homology"/>
<accession>B2HQK6</accession>
<sequence>MDDVNSIVLAAGQAAEEGGTNNFLVPNGTFFFVLAIFLVVLAVIGTFVVPPILKVLRERDAMVAKTLADNKKSAEQFAAAQADYEKAMAEARVQASSYRDNARAEGRKVVEDARAHAEQEVASTLQQANEQLKRERDAVELDLRANVGAMSATLANRIVGVDVTTPAAAG</sequence>
<comment type="function">
    <text evidence="1">F(1)F(0) ATP synthase produces ATP from ADP in the presence of a proton or sodium gradient. F-type ATPases consist of two structural domains, F(1) containing the extramembraneous catalytic core and F(0) containing the membrane proton channel, linked together by a central stalk and a peripheral stalk. During catalysis, ATP synthesis in the catalytic domain of F(1) is coupled via a rotary mechanism of the central stalk subunits to proton translocation.</text>
</comment>
<comment type="function">
    <text evidence="1">Component of the F(0) channel, it forms part of the peripheral stalk, linking F(1) to F(0).</text>
</comment>
<comment type="subunit">
    <text evidence="1">F-type ATPases have 2 components, F(1) - the catalytic core - and F(0) - the membrane proton channel. F(1) has five subunits: alpha(3), beta(3), gamma(1), delta(1), epsilon(1). F(0) has three main subunits: a(1), b(2) and c(10-14). The alpha and beta chains form an alternating ring which encloses part of the gamma chain. F(1) is attached to F(0) by a central stalk formed by the gamma and epsilon chains, while a peripheral stalk is formed by the delta and b chains.</text>
</comment>
<comment type="subcellular location">
    <subcellularLocation>
        <location evidence="1">Cell membrane</location>
        <topology evidence="1">Single-pass membrane protein</topology>
    </subcellularLocation>
</comment>
<comment type="similarity">
    <text evidence="1">Belongs to the ATPase B chain family.</text>
</comment>
<protein>
    <recommendedName>
        <fullName evidence="1">ATP synthase subunit b</fullName>
    </recommendedName>
    <alternativeName>
        <fullName evidence="1">ATP synthase F(0) sector subunit b</fullName>
    </alternativeName>
    <alternativeName>
        <fullName evidence="1">ATPase subunit I</fullName>
    </alternativeName>
    <alternativeName>
        <fullName evidence="1">F-type ATPase subunit b</fullName>
        <shortName evidence="1">F-ATPase subunit b</shortName>
    </alternativeName>
</protein>
<organism>
    <name type="scientific">Mycobacterium marinum (strain ATCC BAA-535 / M)</name>
    <dbReference type="NCBI Taxonomy" id="216594"/>
    <lineage>
        <taxon>Bacteria</taxon>
        <taxon>Bacillati</taxon>
        <taxon>Actinomycetota</taxon>
        <taxon>Actinomycetes</taxon>
        <taxon>Mycobacteriales</taxon>
        <taxon>Mycobacteriaceae</taxon>
        <taxon>Mycobacterium</taxon>
        <taxon>Mycobacterium ulcerans group</taxon>
    </lineage>
</organism>
<keyword id="KW-0066">ATP synthesis</keyword>
<keyword id="KW-1003">Cell membrane</keyword>
<keyword id="KW-0138">CF(0)</keyword>
<keyword id="KW-0375">Hydrogen ion transport</keyword>
<keyword id="KW-0406">Ion transport</keyword>
<keyword id="KW-0472">Membrane</keyword>
<keyword id="KW-1185">Reference proteome</keyword>
<keyword id="KW-0812">Transmembrane</keyword>
<keyword id="KW-1133">Transmembrane helix</keyword>
<keyword id="KW-0813">Transport</keyword>